<feature type="chain" id="PRO_0000070167" description="Trace amine-associated receptor 7d">
    <location>
        <begin position="1"/>
        <end position="358"/>
    </location>
</feature>
<feature type="topological domain" description="Extracellular" evidence="3">
    <location>
        <begin position="1"/>
        <end position="47"/>
    </location>
</feature>
<feature type="transmembrane region" description="Helical; Name=1" evidence="3">
    <location>
        <begin position="48"/>
        <end position="68"/>
    </location>
</feature>
<feature type="topological domain" description="Cytoplasmic" evidence="3">
    <location>
        <begin position="69"/>
        <end position="83"/>
    </location>
</feature>
<feature type="transmembrane region" description="Helical; Name=2" evidence="3">
    <location>
        <begin position="84"/>
        <end position="104"/>
    </location>
</feature>
<feature type="topological domain" description="Extracellular" evidence="3">
    <location>
        <begin position="105"/>
        <end position="121"/>
    </location>
</feature>
<feature type="transmembrane region" description="Helical; Name=3" evidence="3">
    <location>
        <begin position="122"/>
        <end position="143"/>
    </location>
</feature>
<feature type="topological domain" description="Cytoplasmic" evidence="3">
    <location>
        <begin position="144"/>
        <end position="166"/>
    </location>
</feature>
<feature type="transmembrane region" description="Helical; Name=4" evidence="3">
    <location>
        <begin position="167"/>
        <end position="187"/>
    </location>
</feature>
<feature type="topological domain" description="Extracellular" evidence="3">
    <location>
        <begin position="188"/>
        <end position="212"/>
    </location>
</feature>
<feature type="transmembrane region" description="Helical; Name=5" evidence="3">
    <location>
        <begin position="213"/>
        <end position="233"/>
    </location>
</feature>
<feature type="topological domain" description="Cytoplasmic" evidence="3">
    <location>
        <begin position="234"/>
        <end position="274"/>
    </location>
</feature>
<feature type="transmembrane region" description="Helical; Name=6" evidence="3">
    <location>
        <begin position="275"/>
        <end position="295"/>
    </location>
</feature>
<feature type="topological domain" description="Extracellular" evidence="3">
    <location>
        <begin position="296"/>
        <end position="309"/>
    </location>
</feature>
<feature type="transmembrane region" description="Helical; Name=7" evidence="3">
    <location>
        <begin position="310"/>
        <end position="333"/>
    </location>
</feature>
<feature type="topological domain" description="Cytoplasmic" evidence="3">
    <location>
        <begin position="334"/>
        <end position="358"/>
    </location>
</feature>
<feature type="glycosylation site" description="N-linked (GlcNAc...) asparagine" evidence="3">
    <location>
        <position position="34"/>
    </location>
</feature>
<feature type="glycosylation site" description="N-linked (GlcNAc...) asparagine" evidence="3">
    <location>
        <position position="210"/>
    </location>
</feature>
<feature type="disulfide bond" evidence="1">
    <location>
        <begin position="37"/>
        <end position="201"/>
    </location>
</feature>
<feature type="disulfide bond" evidence="4">
    <location>
        <begin position="120"/>
        <end position="205"/>
    </location>
</feature>
<feature type="mutagenesis site" description="Promotes trace-amine receptor activity toward polyamines, such as spermidine." evidence="7">
    <original>SCFEG</original>
    <variation>TCFET</variation>
    <location>
        <begin position="124"/>
        <end position="128"/>
    </location>
</feature>
<feature type="mutagenesis site" description="Decreased trace-amine receptor activity in response to beta-phenylethylamine-binding." evidence="7">
    <original>Y</original>
    <variation>L</variation>
    <variation>T</variation>
    <location>
        <position position="132"/>
    </location>
</feature>
<feature type="mutagenesis site" description="Decreased trace-amine receptor activity in response to beta-phenylethylamine-binding." evidence="7">
    <original>Y</original>
    <variation>C</variation>
    <location>
        <position position="289"/>
    </location>
</feature>
<feature type="mutagenesis site" description="Decreased trace-amine receptor activity in response to beta-phenylethylamine-binding." evidence="7">
    <original>Y</original>
    <variation>L</variation>
    <location>
        <position position="308"/>
    </location>
</feature>
<feature type="mutagenesis site" description="Decreased trace-amine receptor activity in response to beta-phenylethylamine-binding." evidence="7">
    <original>V</original>
    <variation>T</variation>
    <variation>C</variation>
    <location>
        <position position="312"/>
    </location>
</feature>
<evidence type="ECO:0000250" key="1">
    <source>
        <dbReference type="UniProtKB" id="Q5QD04"/>
    </source>
</evidence>
<evidence type="ECO:0000250" key="2">
    <source>
        <dbReference type="UniProtKB" id="Q923X5"/>
    </source>
</evidence>
<evidence type="ECO:0000255" key="3"/>
<evidence type="ECO:0000255" key="4">
    <source>
        <dbReference type="PROSITE-ProRule" id="PRU00521"/>
    </source>
</evidence>
<evidence type="ECO:0000269" key="5">
    <source>
    </source>
</evidence>
<evidence type="ECO:0000269" key="6">
    <source>
    </source>
</evidence>
<evidence type="ECO:0000269" key="7">
    <source>
    </source>
</evidence>
<evidence type="ECO:0000303" key="8">
    <source>
    </source>
</evidence>
<evidence type="ECO:0000303" key="9">
    <source>
    </source>
</evidence>
<evidence type="ECO:0000312" key="10">
    <source>
        <dbReference type="MGI" id="MGI:3527443"/>
    </source>
</evidence>
<accession>Q5QD10</accession>
<organism>
    <name type="scientific">Mus musculus</name>
    <name type="common">Mouse</name>
    <dbReference type="NCBI Taxonomy" id="10090"/>
    <lineage>
        <taxon>Eukaryota</taxon>
        <taxon>Metazoa</taxon>
        <taxon>Chordata</taxon>
        <taxon>Craniata</taxon>
        <taxon>Vertebrata</taxon>
        <taxon>Euteleostomi</taxon>
        <taxon>Mammalia</taxon>
        <taxon>Eutheria</taxon>
        <taxon>Euarchontoglires</taxon>
        <taxon>Glires</taxon>
        <taxon>Rodentia</taxon>
        <taxon>Myomorpha</taxon>
        <taxon>Muroidea</taxon>
        <taxon>Muridae</taxon>
        <taxon>Murinae</taxon>
        <taxon>Mus</taxon>
        <taxon>Mus</taxon>
    </lineage>
</organism>
<dbReference type="EMBL" id="AY702334">
    <property type="protein sequence ID" value="AAV70143.1"/>
    <property type="molecule type" value="Genomic_DNA"/>
</dbReference>
<dbReference type="CCDS" id="CCDS23742.1"/>
<dbReference type="RefSeq" id="NP_001010838.1">
    <property type="nucleotide sequence ID" value="NM_001010838.1"/>
</dbReference>
<dbReference type="SMR" id="Q5QD10"/>
<dbReference type="FunCoup" id="Q5QD10">
    <property type="interactions" value="596"/>
</dbReference>
<dbReference type="STRING" id="10090.ENSMUSP00000090327"/>
<dbReference type="GlyCosmos" id="Q5QD10">
    <property type="glycosylation" value="2 sites, No reported glycans"/>
</dbReference>
<dbReference type="GlyGen" id="Q5QD10">
    <property type="glycosylation" value="2 sites"/>
</dbReference>
<dbReference type="iPTMnet" id="Q5QD10"/>
<dbReference type="PhosphoSitePlus" id="Q5QD10"/>
<dbReference type="PaxDb" id="10090-ENSMUSP00000090327"/>
<dbReference type="DNASU" id="435206"/>
<dbReference type="Ensembl" id="ENSMUST00000092657.2">
    <property type="protein sequence ID" value="ENSMUSP00000090327.2"/>
    <property type="gene ID" value="ENSMUSG00000095569.2"/>
</dbReference>
<dbReference type="GeneID" id="435206"/>
<dbReference type="KEGG" id="mmu:435206"/>
<dbReference type="UCSC" id="uc007eql.1">
    <property type="organism name" value="mouse"/>
</dbReference>
<dbReference type="AGR" id="MGI:3527443"/>
<dbReference type="CTD" id="435206"/>
<dbReference type="MGI" id="MGI:3527443">
    <property type="gene designation" value="Taar7d"/>
</dbReference>
<dbReference type="VEuPathDB" id="HostDB:ENSMUSG00000095569"/>
<dbReference type="eggNOG" id="KOG3656">
    <property type="taxonomic scope" value="Eukaryota"/>
</dbReference>
<dbReference type="GeneTree" id="ENSGT00940000160273"/>
<dbReference type="HOGENOM" id="CLU_009579_11_0_1"/>
<dbReference type="InParanoid" id="Q5QD10"/>
<dbReference type="OMA" id="ITPTHIY"/>
<dbReference type="OrthoDB" id="5959645at2759"/>
<dbReference type="PhylomeDB" id="Q5QD10"/>
<dbReference type="TreeFam" id="TF343107"/>
<dbReference type="BioGRID-ORCS" id="435206">
    <property type="hits" value="2 hits in 43 CRISPR screens"/>
</dbReference>
<dbReference type="PRO" id="PR:Q5QD10"/>
<dbReference type="Proteomes" id="UP000000589">
    <property type="component" value="Chromosome 10"/>
</dbReference>
<dbReference type="RNAct" id="Q5QD10">
    <property type="molecule type" value="protein"/>
</dbReference>
<dbReference type="Bgee" id="ENSMUSG00000095569">
    <property type="expression patterns" value="Expressed in septal olfactory organ and 2 other cell types or tissues"/>
</dbReference>
<dbReference type="GO" id="GO:0005886">
    <property type="term" value="C:plasma membrane"/>
    <property type="evidence" value="ECO:0007669"/>
    <property type="project" value="UniProtKB-SubCell"/>
</dbReference>
<dbReference type="GO" id="GO:0001594">
    <property type="term" value="F:trace-amine receptor activity"/>
    <property type="evidence" value="ECO:0000314"/>
    <property type="project" value="UniProtKB"/>
</dbReference>
<dbReference type="GO" id="GO:0007189">
    <property type="term" value="P:adenylate cyclase-activating G protein-coupled receptor signaling pathway"/>
    <property type="evidence" value="ECO:0000314"/>
    <property type="project" value="UniProtKB"/>
</dbReference>
<dbReference type="FunFam" id="1.20.1070.10:FF:000030">
    <property type="entry name" value="trace amine-associated receptor 1"/>
    <property type="match status" value="1"/>
</dbReference>
<dbReference type="Gene3D" id="1.20.1070.10">
    <property type="entry name" value="Rhodopsin 7-helix transmembrane proteins"/>
    <property type="match status" value="1"/>
</dbReference>
<dbReference type="InterPro" id="IPR000276">
    <property type="entry name" value="GPCR_Rhodpsn"/>
</dbReference>
<dbReference type="InterPro" id="IPR017452">
    <property type="entry name" value="GPCR_Rhodpsn_7TM"/>
</dbReference>
<dbReference type="InterPro" id="IPR050569">
    <property type="entry name" value="TAAR"/>
</dbReference>
<dbReference type="InterPro" id="IPR009132">
    <property type="entry name" value="TAAR_fam"/>
</dbReference>
<dbReference type="PANTHER" id="PTHR24249">
    <property type="entry name" value="HISTAMINE RECEPTOR-RELATED G-PROTEIN COUPLED RECEPTOR"/>
    <property type="match status" value="1"/>
</dbReference>
<dbReference type="PANTHER" id="PTHR24249:SF78">
    <property type="entry name" value="TRACE AMINE-ASSOCIATED RECEPTOR 7A-RELATED"/>
    <property type="match status" value="1"/>
</dbReference>
<dbReference type="Pfam" id="PF00001">
    <property type="entry name" value="7tm_1"/>
    <property type="match status" value="1"/>
</dbReference>
<dbReference type="PRINTS" id="PR00237">
    <property type="entry name" value="GPCRRHODOPSN"/>
</dbReference>
<dbReference type="PRINTS" id="PR01830">
    <property type="entry name" value="TRACEAMINER"/>
</dbReference>
<dbReference type="SMART" id="SM01381">
    <property type="entry name" value="7TM_GPCR_Srsx"/>
    <property type="match status" value="1"/>
</dbReference>
<dbReference type="SUPFAM" id="SSF81321">
    <property type="entry name" value="Family A G protein-coupled receptor-like"/>
    <property type="match status" value="1"/>
</dbReference>
<dbReference type="PROSITE" id="PS00237">
    <property type="entry name" value="G_PROTEIN_RECEP_F1_1"/>
    <property type="match status" value="1"/>
</dbReference>
<dbReference type="PROSITE" id="PS50262">
    <property type="entry name" value="G_PROTEIN_RECEP_F1_2"/>
    <property type="match status" value="1"/>
</dbReference>
<sequence length="358" mass="40305">MATGDDSFPWDQDSILSRDLFSATSTELCYENLNRSCVRSPYSPGPRLILYAVFGFGAVLAVCGNLLVMTSILHFRQLHSPANFLVASLACADFLVGVMVMPFSMVRSVEGCWYFGESYCKFHSCFEGSFCYSSLFHLCFISVDRYIAVSDPLTYPTRFTASVSGKCITFSWLLSIIYSFSLLYTGANDAGLEDLVSALTCVGGCQIAVNQTWVFINFLLFLIPTLVMITVYSKIFLIAKQQAQNIEKMSKQTARASESYKDRVTKRERKAAKTLGIAVAAFLLSWLPYFIDSIIDAFLGFITPTYVYEILVWIVYYNSAMNPLIYAFFYSWFRKAIKLIVSGKILRENSSTTNLFPE</sequence>
<protein>
    <recommendedName>
        <fullName evidence="9">Trace amine-associated receptor 7d</fullName>
        <shortName evidence="8">TaR-7d</shortName>
        <shortName evidence="8">Trace amine receptor 7d</shortName>
        <shortName evidence="9">mTaar7d</shortName>
    </recommendedName>
</protein>
<keyword id="KW-1003">Cell membrane</keyword>
<keyword id="KW-1015">Disulfide bond</keyword>
<keyword id="KW-0297">G-protein coupled receptor</keyword>
<keyword id="KW-0325">Glycoprotein</keyword>
<keyword id="KW-0472">Membrane</keyword>
<keyword id="KW-0675">Receptor</keyword>
<keyword id="KW-1185">Reference proteome</keyword>
<keyword id="KW-0807">Transducer</keyword>
<keyword id="KW-0812">Transmembrane</keyword>
<keyword id="KW-1133">Transmembrane helix</keyword>
<comment type="function">
    <text evidence="7">Olfactory receptor specific for trace amines, such as beta-phenylethylamine (beta-PEA) (PubMed:37225986). Trace amine compounds are enriched in animal body fluids and act on trace amine-associated receptors (TAARs) to elicit both intraspecific and interspecific innate behaviors (PubMed:37225986). Ligand-binding causes a conformation change that triggers signaling via G(s)-class of G alpha proteins (GNAL or GNAS) (PubMed:37225986).</text>
</comment>
<comment type="subcellular location">
    <subcellularLocation>
        <location evidence="2">Cell membrane</location>
        <topology evidence="3">Multi-pass membrane protein</topology>
    </subcellularLocation>
</comment>
<comment type="tissue specificity">
    <text evidence="5">Specifically expressed in neurons of the olfactory epithelium.</text>
</comment>
<comment type="domain">
    <text evidence="1">In addition to the well known disulfide bond common to G-protein coupled receptor 1 family, trace amine-associated receptors (TAARs) contain an unique disulfide bond (Cys-37-Cys-201) connecting the N-terminus to the extracellular Loop 2 (ECL2), which is required for agonist-induced receptor activation.</text>
</comment>
<comment type="disruption phenotype">
    <text evidence="6">Mice lacking Taar2, Taar3, Taar4, Taar5, Taar6, Taar7a, Taar7b, Taar7d, Taar7e, Taar7f, Taar8a, Taar8b, Taar8c and Taar9 show no visible phenotype or behavioral deficits. They however show an absence of aversion to low concentrations of amines such as 2-phenylethylamine, isopentylamine, N-methylpiperidine and cadaverine.</text>
</comment>
<comment type="similarity">
    <text evidence="4">Belongs to the G-protein coupled receptor 1 family.</text>
</comment>
<name>TAA7D_MOUSE</name>
<gene>
    <name evidence="9 10" type="primary">Taar7d</name>
</gene>
<reference key="1">
    <citation type="journal article" date="2005" name="Genomics">
        <title>Trace amine-associated receptors form structurally and functionally distinct subfamilies of novel G protein-coupled receptors.</title>
        <authorList>
            <person name="Lindemann L."/>
            <person name="Ebeling M."/>
            <person name="Kratochwil N.A."/>
            <person name="Bunzow J.R."/>
            <person name="Grandy D.K."/>
            <person name="Hoener M.C."/>
        </authorList>
    </citation>
    <scope>NUCLEOTIDE SEQUENCE [GENOMIC DNA]</scope>
    <source>
        <strain>C57BL/6J</strain>
    </source>
</reference>
<reference key="2">
    <citation type="journal article" date="2006" name="Nature">
        <title>A second class of chemosensory receptors in the olfactory epithelium.</title>
        <authorList>
            <person name="Liberles S.D."/>
            <person name="Buck L.B."/>
        </authorList>
    </citation>
    <scope>TISSUE SPECIFICITY</scope>
</reference>
<reference key="3">
    <citation type="journal article" date="2013" name="Nature">
        <title>Non-redundant coding of aversive odours in the main olfactory pathway.</title>
        <authorList>
            <person name="Dewan A."/>
            <person name="Pacifico R."/>
            <person name="Zhan R."/>
            <person name="Rinberg D."/>
            <person name="Bozza T."/>
        </authorList>
    </citation>
    <scope>DISRUPTION PHENOTYPE</scope>
</reference>
<reference key="4">
    <citation type="journal article" date="2023" name="Nature">
        <title>Structural basis of amine odorant perception by a mammal olfactory receptor.</title>
        <authorList>
            <person name="Guo L."/>
            <person name="Cheng J."/>
            <person name="Lian S."/>
            <person name="Liu Q."/>
            <person name="Lu Y."/>
            <person name="Zheng Y."/>
            <person name="Zhu K."/>
            <person name="Zhang M."/>
            <person name="Kong Y."/>
            <person name="Zhang C."/>
            <person name="Rong N."/>
            <person name="Zhuang Y."/>
            <person name="Fang G."/>
            <person name="Jiang J."/>
            <person name="Zhang T."/>
            <person name="Han X."/>
            <person name="Liu Z."/>
            <person name="Xia M."/>
            <person name="Liu S."/>
            <person name="Zhang L."/>
            <person name="Liberles S.D."/>
            <person name="Yu X."/>
            <person name="Xu Y."/>
            <person name="Yang F."/>
            <person name="Li Q."/>
            <person name="Sun J.P."/>
        </authorList>
    </citation>
    <scope>FUNCTION</scope>
    <scope>MUTAGENESIS OF 124-SER--GLY-128; TYR-132; TYR-289; TYR-308 AND VAL-312</scope>
</reference>
<proteinExistence type="evidence at protein level"/>